<feature type="chain" id="PRO_1000214347" description="Small ribosomal subunit protein uS3">
    <location>
        <begin position="1"/>
        <end position="268"/>
    </location>
</feature>
<feature type="domain" description="KH type-2" evidence="1">
    <location>
        <begin position="38"/>
        <end position="106"/>
    </location>
</feature>
<feature type="region of interest" description="Disordered" evidence="2">
    <location>
        <begin position="217"/>
        <end position="268"/>
    </location>
</feature>
<feature type="compositionally biased region" description="Low complexity" evidence="2">
    <location>
        <begin position="237"/>
        <end position="268"/>
    </location>
</feature>
<reference key="1">
    <citation type="submission" date="2005-03" db="EMBL/GenBank/DDBJ databases">
        <title>Comparison of the complete genome sequences of Rhodococcus erythropolis PR4 and Rhodococcus opacus B4.</title>
        <authorList>
            <person name="Takarada H."/>
            <person name="Sekine M."/>
            <person name="Hosoyama A."/>
            <person name="Yamada R."/>
            <person name="Fujisawa T."/>
            <person name="Omata S."/>
            <person name="Shimizu A."/>
            <person name="Tsukatani N."/>
            <person name="Tanikawa S."/>
            <person name="Fujita N."/>
            <person name="Harayama S."/>
        </authorList>
    </citation>
    <scope>NUCLEOTIDE SEQUENCE [LARGE SCALE GENOMIC DNA]</scope>
    <source>
        <strain>PR4 / NBRC 100887</strain>
    </source>
</reference>
<protein>
    <recommendedName>
        <fullName evidence="1">Small ribosomal subunit protein uS3</fullName>
    </recommendedName>
    <alternativeName>
        <fullName evidence="3">30S ribosomal protein S3</fullName>
    </alternativeName>
</protein>
<comment type="function">
    <text evidence="1">Binds the lower part of the 30S subunit head. Binds mRNA in the 70S ribosome, positioning it for translation.</text>
</comment>
<comment type="subunit">
    <text evidence="1">Part of the 30S ribosomal subunit. Forms a tight complex with proteins S10 and S14.</text>
</comment>
<comment type="similarity">
    <text evidence="1">Belongs to the universal ribosomal protein uS3 family.</text>
</comment>
<sequence length="268" mass="29641">MGQKINPHGFRLGITTDWKSRWYADKQYAEYVKEDVAIRKLLATGMERAGIAKVEIERTRDRVRVDIHTARPGIVIGRRGAEADRIRSELEKLTGKQVQLNILEVKNAEAEAQLVAQGVAEQLSNRVAFRRAMRKAIQSAMRQPNVKGIRVQCSGRLGGAEMSRSEFYREGRVPLHTLRADIDYGLYEAKTTFGRIGVKVWIYKGDIVGGKRELAANTAAPAGDRPRRERPSRPRRSGATGTTATSTEAGRAATATADAPATEQNQEG</sequence>
<gene>
    <name evidence="1" type="primary">rpsC</name>
    <name type="ordered locus">RER_18580</name>
</gene>
<proteinExistence type="inferred from homology"/>
<accession>C0ZW31</accession>
<organism>
    <name type="scientific">Rhodococcus erythropolis (strain PR4 / NBRC 100887)</name>
    <dbReference type="NCBI Taxonomy" id="234621"/>
    <lineage>
        <taxon>Bacteria</taxon>
        <taxon>Bacillati</taxon>
        <taxon>Actinomycetota</taxon>
        <taxon>Actinomycetes</taxon>
        <taxon>Mycobacteriales</taxon>
        <taxon>Nocardiaceae</taxon>
        <taxon>Rhodococcus</taxon>
        <taxon>Rhodococcus erythropolis group</taxon>
    </lineage>
</organism>
<evidence type="ECO:0000255" key="1">
    <source>
        <dbReference type="HAMAP-Rule" id="MF_01309"/>
    </source>
</evidence>
<evidence type="ECO:0000256" key="2">
    <source>
        <dbReference type="SAM" id="MobiDB-lite"/>
    </source>
</evidence>
<evidence type="ECO:0000305" key="3"/>
<name>RS3_RHOE4</name>
<dbReference type="EMBL" id="AP008957">
    <property type="protein sequence ID" value="BAH32566.1"/>
    <property type="molecule type" value="Genomic_DNA"/>
</dbReference>
<dbReference type="RefSeq" id="WP_003941003.1">
    <property type="nucleotide sequence ID" value="NC_012490.1"/>
</dbReference>
<dbReference type="SMR" id="C0ZW31"/>
<dbReference type="GeneID" id="93803298"/>
<dbReference type="KEGG" id="rer:RER_18580"/>
<dbReference type="eggNOG" id="COG0092">
    <property type="taxonomic scope" value="Bacteria"/>
</dbReference>
<dbReference type="HOGENOM" id="CLU_058591_0_0_11"/>
<dbReference type="Proteomes" id="UP000002204">
    <property type="component" value="Chromosome"/>
</dbReference>
<dbReference type="GO" id="GO:0022627">
    <property type="term" value="C:cytosolic small ribosomal subunit"/>
    <property type="evidence" value="ECO:0007669"/>
    <property type="project" value="TreeGrafter"/>
</dbReference>
<dbReference type="GO" id="GO:0003729">
    <property type="term" value="F:mRNA binding"/>
    <property type="evidence" value="ECO:0007669"/>
    <property type="project" value="UniProtKB-UniRule"/>
</dbReference>
<dbReference type="GO" id="GO:0019843">
    <property type="term" value="F:rRNA binding"/>
    <property type="evidence" value="ECO:0007669"/>
    <property type="project" value="UniProtKB-UniRule"/>
</dbReference>
<dbReference type="GO" id="GO:0003735">
    <property type="term" value="F:structural constituent of ribosome"/>
    <property type="evidence" value="ECO:0007669"/>
    <property type="project" value="InterPro"/>
</dbReference>
<dbReference type="GO" id="GO:0006412">
    <property type="term" value="P:translation"/>
    <property type="evidence" value="ECO:0007669"/>
    <property type="project" value="UniProtKB-UniRule"/>
</dbReference>
<dbReference type="CDD" id="cd02412">
    <property type="entry name" value="KH-II_30S_S3"/>
    <property type="match status" value="1"/>
</dbReference>
<dbReference type="FunFam" id="3.30.1140.32:FF:000002">
    <property type="entry name" value="30S ribosomal protein S3"/>
    <property type="match status" value="1"/>
</dbReference>
<dbReference type="FunFam" id="3.30.300.20:FF:000001">
    <property type="entry name" value="30S ribosomal protein S3"/>
    <property type="match status" value="1"/>
</dbReference>
<dbReference type="Gene3D" id="3.30.300.20">
    <property type="match status" value="1"/>
</dbReference>
<dbReference type="Gene3D" id="3.30.1140.32">
    <property type="entry name" value="Ribosomal protein S3, C-terminal domain"/>
    <property type="match status" value="1"/>
</dbReference>
<dbReference type="HAMAP" id="MF_01309_B">
    <property type="entry name" value="Ribosomal_uS3_B"/>
    <property type="match status" value="1"/>
</dbReference>
<dbReference type="InterPro" id="IPR004087">
    <property type="entry name" value="KH_dom"/>
</dbReference>
<dbReference type="InterPro" id="IPR015946">
    <property type="entry name" value="KH_dom-like_a/b"/>
</dbReference>
<dbReference type="InterPro" id="IPR004044">
    <property type="entry name" value="KH_dom_type_2"/>
</dbReference>
<dbReference type="InterPro" id="IPR009019">
    <property type="entry name" value="KH_sf_prok-type"/>
</dbReference>
<dbReference type="InterPro" id="IPR036419">
    <property type="entry name" value="Ribosomal_S3_C_sf"/>
</dbReference>
<dbReference type="InterPro" id="IPR005704">
    <property type="entry name" value="Ribosomal_uS3_bac-typ"/>
</dbReference>
<dbReference type="InterPro" id="IPR001351">
    <property type="entry name" value="Ribosomal_uS3_C"/>
</dbReference>
<dbReference type="InterPro" id="IPR018280">
    <property type="entry name" value="Ribosomal_uS3_CS"/>
</dbReference>
<dbReference type="NCBIfam" id="TIGR01009">
    <property type="entry name" value="rpsC_bact"/>
    <property type="match status" value="1"/>
</dbReference>
<dbReference type="PANTHER" id="PTHR11760">
    <property type="entry name" value="30S/40S RIBOSOMAL PROTEIN S3"/>
    <property type="match status" value="1"/>
</dbReference>
<dbReference type="PANTHER" id="PTHR11760:SF19">
    <property type="entry name" value="SMALL RIBOSOMAL SUBUNIT PROTEIN US3C"/>
    <property type="match status" value="1"/>
</dbReference>
<dbReference type="Pfam" id="PF07650">
    <property type="entry name" value="KH_2"/>
    <property type="match status" value="1"/>
</dbReference>
<dbReference type="Pfam" id="PF00189">
    <property type="entry name" value="Ribosomal_S3_C"/>
    <property type="match status" value="1"/>
</dbReference>
<dbReference type="SMART" id="SM00322">
    <property type="entry name" value="KH"/>
    <property type="match status" value="1"/>
</dbReference>
<dbReference type="SUPFAM" id="SSF54814">
    <property type="entry name" value="Prokaryotic type KH domain (KH-domain type II)"/>
    <property type="match status" value="1"/>
</dbReference>
<dbReference type="SUPFAM" id="SSF54821">
    <property type="entry name" value="Ribosomal protein S3 C-terminal domain"/>
    <property type="match status" value="1"/>
</dbReference>
<dbReference type="PROSITE" id="PS50823">
    <property type="entry name" value="KH_TYPE_2"/>
    <property type="match status" value="1"/>
</dbReference>
<dbReference type="PROSITE" id="PS00548">
    <property type="entry name" value="RIBOSOMAL_S3"/>
    <property type="match status" value="1"/>
</dbReference>
<keyword id="KW-0687">Ribonucleoprotein</keyword>
<keyword id="KW-0689">Ribosomal protein</keyword>
<keyword id="KW-0694">RNA-binding</keyword>
<keyword id="KW-0699">rRNA-binding</keyword>